<dbReference type="EMBL" id="AE005174">
    <property type="protein sequence ID" value="AAG54617.1"/>
    <property type="molecule type" value="Genomic_DNA"/>
</dbReference>
<dbReference type="EMBL" id="BA000007">
    <property type="protein sequence ID" value="BAB33745.1"/>
    <property type="molecule type" value="Genomic_DNA"/>
</dbReference>
<dbReference type="PIR" id="B90669">
    <property type="entry name" value="B90669"/>
</dbReference>
<dbReference type="PIR" id="E85519">
    <property type="entry name" value="E85519"/>
</dbReference>
<dbReference type="RefSeq" id="NP_308349.1">
    <property type="nucleotide sequence ID" value="NC_002695.1"/>
</dbReference>
<dbReference type="RefSeq" id="WP_000716386.1">
    <property type="nucleotide sequence ID" value="NZ_VOAI01000033.1"/>
</dbReference>
<dbReference type="SMR" id="Q8X6I2"/>
<dbReference type="STRING" id="155864.Z0359"/>
<dbReference type="GeneID" id="914421"/>
<dbReference type="KEGG" id="ece:Z0359"/>
<dbReference type="KEGG" id="ecs:ECs_0322"/>
<dbReference type="PATRIC" id="fig|386585.9.peg.416"/>
<dbReference type="eggNOG" id="COG3121">
    <property type="taxonomic scope" value="Bacteria"/>
</dbReference>
<dbReference type="HOGENOM" id="CLU_106652_0_0_6"/>
<dbReference type="OMA" id="ENYFVMP"/>
<dbReference type="Proteomes" id="UP000000558">
    <property type="component" value="Chromosome"/>
</dbReference>
<dbReference type="Proteomes" id="UP000002519">
    <property type="component" value="Chromosome"/>
</dbReference>
<dbReference type="Gene3D" id="2.60.40.10">
    <property type="entry name" value="Immunoglobulins"/>
    <property type="match status" value="1"/>
</dbReference>
<dbReference type="InterPro" id="IPR040695">
    <property type="entry name" value="EcpB_C"/>
</dbReference>
<dbReference type="InterPro" id="IPR013783">
    <property type="entry name" value="Ig-like_fold"/>
</dbReference>
<dbReference type="InterPro" id="IPR008962">
    <property type="entry name" value="PapD-like_sf"/>
</dbReference>
<dbReference type="Pfam" id="PF18649">
    <property type="entry name" value="EcpB_C"/>
    <property type="match status" value="1"/>
</dbReference>
<dbReference type="SUPFAM" id="SSF49354">
    <property type="entry name" value="PapD-like"/>
    <property type="match status" value="1"/>
</dbReference>
<accession>Q8X6I2</accession>
<accession>Q7AHC1</accession>
<protein>
    <recommendedName>
        <fullName>Probable fimbrial chaperone EcpB</fullName>
    </recommendedName>
</protein>
<evidence type="ECO:0000250" key="1"/>
<evidence type="ECO:0000255" key="2"/>
<evidence type="ECO:0000269" key="3">
    <source>
    </source>
</evidence>
<evidence type="ECO:0000305" key="4"/>
<feature type="signal peptide" evidence="2">
    <location>
        <begin position="1"/>
        <end position="20"/>
    </location>
</feature>
<feature type="chain" id="PRO_0000369161" description="Probable fimbrial chaperone EcpB">
    <location>
        <begin position="21"/>
        <end position="222"/>
    </location>
</feature>
<reference key="1">
    <citation type="journal article" date="2001" name="Nature">
        <title>Genome sequence of enterohaemorrhagic Escherichia coli O157:H7.</title>
        <authorList>
            <person name="Perna N.T."/>
            <person name="Plunkett G. III"/>
            <person name="Burland V."/>
            <person name="Mau B."/>
            <person name="Glasner J.D."/>
            <person name="Rose D.J."/>
            <person name="Mayhew G.F."/>
            <person name="Evans P.S."/>
            <person name="Gregor J."/>
            <person name="Kirkpatrick H.A."/>
            <person name="Posfai G."/>
            <person name="Hackett J."/>
            <person name="Klink S."/>
            <person name="Boutin A."/>
            <person name="Shao Y."/>
            <person name="Miller L."/>
            <person name="Grotbeck E.J."/>
            <person name="Davis N.W."/>
            <person name="Lim A."/>
            <person name="Dimalanta E.T."/>
            <person name="Potamousis K."/>
            <person name="Apodaca J."/>
            <person name="Anantharaman T.S."/>
            <person name="Lin J."/>
            <person name="Yen G."/>
            <person name="Schwartz D.C."/>
            <person name="Welch R.A."/>
            <person name="Blattner F.R."/>
        </authorList>
    </citation>
    <scope>NUCLEOTIDE SEQUENCE [LARGE SCALE GENOMIC DNA]</scope>
    <source>
        <strain>O157:H7 / EDL933 / ATCC 700927 / EHEC</strain>
    </source>
</reference>
<reference key="2">
    <citation type="journal article" date="2001" name="DNA Res.">
        <title>Complete genome sequence of enterohemorrhagic Escherichia coli O157:H7 and genomic comparison with a laboratory strain K-12.</title>
        <authorList>
            <person name="Hayashi T."/>
            <person name="Makino K."/>
            <person name="Ohnishi M."/>
            <person name="Kurokawa K."/>
            <person name="Ishii K."/>
            <person name="Yokoyama K."/>
            <person name="Han C.-G."/>
            <person name="Ohtsubo E."/>
            <person name="Nakayama K."/>
            <person name="Murata T."/>
            <person name="Tanaka M."/>
            <person name="Tobe T."/>
            <person name="Iida T."/>
            <person name="Takami H."/>
            <person name="Honda T."/>
            <person name="Sasakawa C."/>
            <person name="Ogasawara N."/>
            <person name="Yasunaga T."/>
            <person name="Kuhara S."/>
            <person name="Shiba T."/>
            <person name="Hattori M."/>
            <person name="Shinagawa H."/>
        </authorList>
    </citation>
    <scope>NUCLEOTIDE SEQUENCE [LARGE SCALE GENOMIC DNA]</scope>
    <source>
        <strain>O157:H7 / Sakai / RIMD 0509952 / EHEC</strain>
    </source>
</reference>
<reference key="3">
    <citation type="journal article" date="2012" name="J. Bacteriol.">
        <title>Transcriptional regulation of the ecp operon by EcpR, IHF, and H-NS in attaching and effacing Escherichia coli.</title>
        <authorList>
            <person name="Martinez-Santos V.I."/>
            <person name="Medrano-Lopez A."/>
            <person name="Saldana Z."/>
            <person name="Giron J.A."/>
            <person name="Puente J.L."/>
        </authorList>
    </citation>
    <scope>INDUCTION</scope>
    <source>
        <strain>O157:H7 / EDL933 / ATCC 700927 / EHEC</strain>
    </source>
</reference>
<proteinExistence type="evidence at transcript level"/>
<name>ECPB_ECO57</name>
<gene>
    <name type="primary">ecpB</name>
    <name type="synonym">matC</name>
    <name type="ordered locus">Z0359</name>
    <name type="ordered locus">ECs0322</name>
</gene>
<comment type="function">
    <text evidence="1">Part of the ecpRABCDE operon, which encodes the E.coli common pilus (ECP). ECP is found in both commensal and pathogenic strains and plays a dual role in early-stage biofilm development and host cell recognition (By similarity).</text>
</comment>
<comment type="induction">
    <text evidence="3">Negatively regulated by H-NS. Positively regulated by IHF and EcpR.</text>
</comment>
<comment type="similarity">
    <text evidence="4">Belongs to the EcpB/EcpE family.</text>
</comment>
<keyword id="KW-0143">Chaperone</keyword>
<keyword id="KW-1029">Fimbrium biogenesis</keyword>
<keyword id="KW-1185">Reference proteome</keyword>
<keyword id="KW-0732">Signal</keyword>
<sequence length="222" mass="24513">MKKHLLLLALLLSGISPAQALDVGDISSFMNSDSSTLSKTIKNSTDSGRLINIRLERLSSPLDDGQVISMDKPDELLLTPASLLLPAQASEVIRFFYKGPADEKERYYRIVWFDQALSDAQRDNANRSAVATASARIGTILVVAPRQANYHFQYANGTLTNTGNATLRILAYGPCLKAANGKECKENYYLMPGKSRRFTRVDTADNKGRVALWQGDKFIPVK</sequence>
<organism>
    <name type="scientific">Escherichia coli O157:H7</name>
    <dbReference type="NCBI Taxonomy" id="83334"/>
    <lineage>
        <taxon>Bacteria</taxon>
        <taxon>Pseudomonadati</taxon>
        <taxon>Pseudomonadota</taxon>
        <taxon>Gammaproteobacteria</taxon>
        <taxon>Enterobacterales</taxon>
        <taxon>Enterobacteriaceae</taxon>
        <taxon>Escherichia</taxon>
    </lineage>
</organism>